<organism>
    <name type="scientific">Cutibacterium acnes (strain DSM 16379 / KPA171202)</name>
    <name type="common">Propionibacterium acnes</name>
    <dbReference type="NCBI Taxonomy" id="267747"/>
    <lineage>
        <taxon>Bacteria</taxon>
        <taxon>Bacillati</taxon>
        <taxon>Actinomycetota</taxon>
        <taxon>Actinomycetes</taxon>
        <taxon>Propionibacteriales</taxon>
        <taxon>Propionibacteriaceae</taxon>
        <taxon>Cutibacterium</taxon>
    </lineage>
</organism>
<comment type="function">
    <text evidence="1">Cell wall formation.</text>
</comment>
<comment type="catalytic activity">
    <reaction evidence="1">
        <text>UDP-N-acetyl-alpha-D-muramate + NADP(+) = UDP-N-acetyl-3-O-(1-carboxyvinyl)-alpha-D-glucosamine + NADPH + H(+)</text>
        <dbReference type="Rhea" id="RHEA:12248"/>
        <dbReference type="ChEBI" id="CHEBI:15378"/>
        <dbReference type="ChEBI" id="CHEBI:57783"/>
        <dbReference type="ChEBI" id="CHEBI:58349"/>
        <dbReference type="ChEBI" id="CHEBI:68483"/>
        <dbReference type="ChEBI" id="CHEBI:70757"/>
        <dbReference type="EC" id="1.3.1.98"/>
    </reaction>
</comment>
<comment type="cofactor">
    <cofactor evidence="1">
        <name>FAD</name>
        <dbReference type="ChEBI" id="CHEBI:57692"/>
    </cofactor>
</comment>
<comment type="pathway">
    <text evidence="1">Cell wall biogenesis; peptidoglycan biosynthesis.</text>
</comment>
<comment type="subcellular location">
    <subcellularLocation>
        <location evidence="1">Cytoplasm</location>
    </subcellularLocation>
</comment>
<comment type="similarity">
    <text evidence="1">Belongs to the MurB family.</text>
</comment>
<feature type="chain" id="PRO_0000224705" description="UDP-N-acetylenolpyruvoylglucosamine reductase">
    <location>
        <begin position="1"/>
        <end position="376"/>
    </location>
</feature>
<feature type="domain" description="FAD-binding PCMH-type" evidence="1">
    <location>
        <begin position="48"/>
        <end position="219"/>
    </location>
</feature>
<feature type="active site" evidence="1">
    <location>
        <position position="196"/>
    </location>
</feature>
<feature type="active site" description="Proton donor" evidence="1">
    <location>
        <position position="274"/>
    </location>
</feature>
<feature type="active site" evidence="1">
    <location>
        <position position="368"/>
    </location>
</feature>
<gene>
    <name evidence="1" type="primary">murB</name>
    <name type="ordered locus">PPA1894</name>
</gene>
<dbReference type="EC" id="1.3.1.98" evidence="1"/>
<dbReference type="EMBL" id="AE017283">
    <property type="protein sequence ID" value="AAT83615.1"/>
    <property type="molecule type" value="Genomic_DNA"/>
</dbReference>
<dbReference type="RefSeq" id="WP_002516000.1">
    <property type="nucleotide sequence ID" value="NZ_CP025935.1"/>
</dbReference>
<dbReference type="SMR" id="Q6A6J8"/>
<dbReference type="EnsemblBacteria" id="AAT83615">
    <property type="protein sequence ID" value="AAT83615"/>
    <property type="gene ID" value="PPA1894"/>
</dbReference>
<dbReference type="KEGG" id="pac:PPA1894"/>
<dbReference type="eggNOG" id="COG0812">
    <property type="taxonomic scope" value="Bacteria"/>
</dbReference>
<dbReference type="HOGENOM" id="CLU_035304_0_1_11"/>
<dbReference type="UniPathway" id="UPA00219"/>
<dbReference type="Proteomes" id="UP000000603">
    <property type="component" value="Chromosome"/>
</dbReference>
<dbReference type="GO" id="GO:0005829">
    <property type="term" value="C:cytosol"/>
    <property type="evidence" value="ECO:0007669"/>
    <property type="project" value="TreeGrafter"/>
</dbReference>
<dbReference type="GO" id="GO:0071949">
    <property type="term" value="F:FAD binding"/>
    <property type="evidence" value="ECO:0007669"/>
    <property type="project" value="InterPro"/>
</dbReference>
<dbReference type="GO" id="GO:0008762">
    <property type="term" value="F:UDP-N-acetylmuramate dehydrogenase activity"/>
    <property type="evidence" value="ECO:0007669"/>
    <property type="project" value="UniProtKB-UniRule"/>
</dbReference>
<dbReference type="GO" id="GO:0051301">
    <property type="term" value="P:cell division"/>
    <property type="evidence" value="ECO:0007669"/>
    <property type="project" value="UniProtKB-KW"/>
</dbReference>
<dbReference type="GO" id="GO:0071555">
    <property type="term" value="P:cell wall organization"/>
    <property type="evidence" value="ECO:0007669"/>
    <property type="project" value="UniProtKB-KW"/>
</dbReference>
<dbReference type="GO" id="GO:0009252">
    <property type="term" value="P:peptidoglycan biosynthetic process"/>
    <property type="evidence" value="ECO:0007669"/>
    <property type="project" value="UniProtKB-UniRule"/>
</dbReference>
<dbReference type="GO" id="GO:0008360">
    <property type="term" value="P:regulation of cell shape"/>
    <property type="evidence" value="ECO:0007669"/>
    <property type="project" value="UniProtKB-KW"/>
</dbReference>
<dbReference type="Gene3D" id="3.30.465.10">
    <property type="match status" value="1"/>
</dbReference>
<dbReference type="Gene3D" id="3.90.78.10">
    <property type="entry name" value="UDP-N-acetylenolpyruvoylglucosamine reductase, C-terminal domain"/>
    <property type="match status" value="1"/>
</dbReference>
<dbReference type="Gene3D" id="3.30.43.10">
    <property type="entry name" value="Uridine Diphospho-n-acetylenolpyruvylglucosamine Reductase, domain 2"/>
    <property type="match status" value="1"/>
</dbReference>
<dbReference type="HAMAP" id="MF_00037">
    <property type="entry name" value="MurB"/>
    <property type="match status" value="1"/>
</dbReference>
<dbReference type="InterPro" id="IPR016166">
    <property type="entry name" value="FAD-bd_PCMH"/>
</dbReference>
<dbReference type="InterPro" id="IPR036318">
    <property type="entry name" value="FAD-bd_PCMH-like_sf"/>
</dbReference>
<dbReference type="InterPro" id="IPR016167">
    <property type="entry name" value="FAD-bd_PCMH_sub1"/>
</dbReference>
<dbReference type="InterPro" id="IPR016169">
    <property type="entry name" value="FAD-bd_PCMH_sub2"/>
</dbReference>
<dbReference type="InterPro" id="IPR003170">
    <property type="entry name" value="MurB"/>
</dbReference>
<dbReference type="InterPro" id="IPR011601">
    <property type="entry name" value="MurB_C"/>
</dbReference>
<dbReference type="InterPro" id="IPR036635">
    <property type="entry name" value="MurB_C_sf"/>
</dbReference>
<dbReference type="InterPro" id="IPR006094">
    <property type="entry name" value="Oxid_FAD_bind_N"/>
</dbReference>
<dbReference type="NCBIfam" id="TIGR00179">
    <property type="entry name" value="murB"/>
    <property type="match status" value="1"/>
</dbReference>
<dbReference type="NCBIfam" id="NF010478">
    <property type="entry name" value="PRK13903.1"/>
    <property type="match status" value="1"/>
</dbReference>
<dbReference type="PANTHER" id="PTHR21071">
    <property type="entry name" value="UDP-N-ACETYLENOLPYRUVOYLGLUCOSAMINE REDUCTASE"/>
    <property type="match status" value="1"/>
</dbReference>
<dbReference type="PANTHER" id="PTHR21071:SF4">
    <property type="entry name" value="UDP-N-ACETYLENOLPYRUVOYLGLUCOSAMINE REDUCTASE"/>
    <property type="match status" value="1"/>
</dbReference>
<dbReference type="Pfam" id="PF01565">
    <property type="entry name" value="FAD_binding_4"/>
    <property type="match status" value="1"/>
</dbReference>
<dbReference type="Pfam" id="PF02873">
    <property type="entry name" value="MurB_C"/>
    <property type="match status" value="1"/>
</dbReference>
<dbReference type="SUPFAM" id="SSF56176">
    <property type="entry name" value="FAD-binding/transporter-associated domain-like"/>
    <property type="match status" value="1"/>
</dbReference>
<dbReference type="SUPFAM" id="SSF56194">
    <property type="entry name" value="Uridine diphospho-N-Acetylenolpyruvylglucosamine reductase, MurB, C-terminal domain"/>
    <property type="match status" value="1"/>
</dbReference>
<dbReference type="PROSITE" id="PS51387">
    <property type="entry name" value="FAD_PCMH"/>
    <property type="match status" value="1"/>
</dbReference>
<keyword id="KW-0131">Cell cycle</keyword>
<keyword id="KW-0132">Cell division</keyword>
<keyword id="KW-0133">Cell shape</keyword>
<keyword id="KW-0961">Cell wall biogenesis/degradation</keyword>
<keyword id="KW-0963">Cytoplasm</keyword>
<keyword id="KW-0274">FAD</keyword>
<keyword id="KW-0285">Flavoprotein</keyword>
<keyword id="KW-0521">NADP</keyword>
<keyword id="KW-0560">Oxidoreductase</keyword>
<keyword id="KW-0573">Peptidoglycan synthesis</keyword>
<sequence>MSTTVIGPYEDDDPTEACSTIHHEVIGTTTCLSGGEDVPLAPLTTLKVGGPARHLVIATTHDELLATVRDCDRRGEPCLVLGGGSNVLVGDNGFDGTVVRVATSGLSAEVSSCGGALVTVAAGQVWDDFVVHAIEQEWIGPEFLSGIPGLVGSTPIQNVGAYGVEVGEFIARVRTWDRVDDTQRTFTADQCDFGYRSSRFKAEPDRYVVLDVTMQFNLGTRSLPVRYAELARRLGVEPGERVDTSQVRETVLAVRAGKGMVLNPNDHDTWSAGSFFTNPLVSPDQVPEGAPAFAQSDGRVKTSAAWLIDHAGYGKGFKVAEDAPASLSTKHVLALTNRGGASSGDFTTLARTVIDGVRDVYGITLVPEPRLIGCTI</sequence>
<reference key="1">
    <citation type="journal article" date="2004" name="Science">
        <title>The complete genome sequence of Propionibacterium acnes, a commensal of human skin.</title>
        <authorList>
            <person name="Brueggemann H."/>
            <person name="Henne A."/>
            <person name="Hoster F."/>
            <person name="Liesegang H."/>
            <person name="Wiezer A."/>
            <person name="Strittmatter A."/>
            <person name="Hujer S."/>
            <person name="Duerre P."/>
            <person name="Gottschalk G."/>
        </authorList>
    </citation>
    <scope>NUCLEOTIDE SEQUENCE [LARGE SCALE GENOMIC DNA]</scope>
    <source>
        <strain>DSM 16379 / KPA171202</strain>
    </source>
</reference>
<accession>Q6A6J8</accession>
<protein>
    <recommendedName>
        <fullName evidence="1">UDP-N-acetylenolpyruvoylglucosamine reductase</fullName>
        <ecNumber evidence="1">1.3.1.98</ecNumber>
    </recommendedName>
    <alternativeName>
        <fullName evidence="1">UDP-N-acetylmuramate dehydrogenase</fullName>
    </alternativeName>
</protein>
<proteinExistence type="inferred from homology"/>
<name>MURB_CUTAK</name>
<evidence type="ECO:0000255" key="1">
    <source>
        <dbReference type="HAMAP-Rule" id="MF_00037"/>
    </source>
</evidence>